<reference key="1">
    <citation type="journal article" date="1997" name="Nucleic Acids Res.">
        <title>Evolutionarily conserved and functionally important residues in the I-CeuI homing endonuclease.</title>
        <authorList>
            <person name="Turmel M."/>
            <person name="Otis C."/>
            <person name="Cote V."/>
            <person name="Lemieux C."/>
        </authorList>
    </citation>
    <scope>NUCLEOTIDE SEQUENCE [GENOMIC DNA]</scope>
    <source>
        <strain>UTEX 393</strain>
    </source>
</reference>
<reference key="2">
    <citation type="journal article" date="2006" name="BMC Evol. Biol.">
        <title>The complete chloroplast genome sequence of the chlorophycean green alga Scenedesmus obliquus reveals a compact gene organization and a biased distribution of genes on the two DNA strands.</title>
        <authorList>
            <person name="de Cambiaire J.-C."/>
            <person name="Otis C."/>
            <person name="Lemieux C."/>
            <person name="Turmel M."/>
        </authorList>
    </citation>
    <scope>NUCLEOTIDE SEQUENCE [LARGE SCALE GENOMIC DNA]</scope>
    <source>
        <strain>UTEX 393</strain>
    </source>
</reference>
<reference key="3">
    <citation type="journal article" date="1989" name="Mol. Gen. Genet.">
        <title>The intron of a plastid gene from a green alga contains an open reading frame for a reverse transcriptase-like enzyme.</title>
        <authorList>
            <person name="Kueck U."/>
        </authorList>
    </citation>
    <scope>NUCLEOTIDE SEQUENCE [GENOMIC DNA] OF 1-129</scope>
    <source>
        <strain>KS3/2</strain>
    </source>
</reference>
<protein>
    <recommendedName>
        <fullName>DNA-directed RNA polymerase subunit alpha</fullName>
        <shortName>PEP</shortName>
        <ecNumber>2.7.7.6</ecNumber>
    </recommendedName>
    <alternativeName>
        <fullName>Plastid-encoded RNA polymerase subunit alpha</fullName>
        <shortName>RNA polymerase subunit alpha</shortName>
    </alternativeName>
</protein>
<keyword id="KW-0150">Chloroplast</keyword>
<keyword id="KW-0240">DNA-directed RNA polymerase</keyword>
<keyword id="KW-0548">Nucleotidyltransferase</keyword>
<keyword id="KW-0934">Plastid</keyword>
<keyword id="KW-0804">Transcription</keyword>
<keyword id="KW-0808">Transferase</keyword>
<proteinExistence type="inferred from homology"/>
<name>RPOA_TETOB</name>
<sequence>MNKKIQDFFLSCKECILENPRSFYGSFSLGPFKNSQSLTVANALRRTLLAELSNIAITHLEIEGVTHEYSTLVGVRESVLDLLLNFKGIALKNTSPVTKPLFGYLQVRGPGVVRASDLKFPPMIQCVDPDQYIATLNENGKLILKFRISDFKNSQENLNFEVSKTFLNIPNFGHFDTSSFQNFENSNFFSSSFFASQKMIKSKRKTKFSQLKVDYLSSFGFSTQHKRSGLNQTQKFAMQHQNPFRIEKNQQDFNKNKNGNFDSQKNKTNSLWVDPLFNPILKVNYIIETIEPMQKNIPNEIVFIELWTNGSIHPRKAFYTALLYLKTMFDKLDCMRLLNYEFSNTMLESEKTSTKFFKTFEYDFRFYNSREDKTMKSFTPEKFFLPEEIEDVEKDYLLNLKNQADNTWNDLPLTNLNLPYRITKILAKNNFFVVGDLLKISPNELKKLSGIGNYCVFILQKRFEKLGLKLGSRNEKNL</sequence>
<gene>
    <name type="primary">rpoA</name>
</gene>
<comment type="function">
    <text evidence="1">DNA-dependent RNA polymerase catalyzes the transcription of DNA into RNA using the four ribonucleoside triphosphates as substrates.</text>
</comment>
<comment type="catalytic activity">
    <reaction>
        <text>RNA(n) + a ribonucleoside 5'-triphosphate = RNA(n+1) + diphosphate</text>
        <dbReference type="Rhea" id="RHEA:21248"/>
        <dbReference type="Rhea" id="RHEA-COMP:14527"/>
        <dbReference type="Rhea" id="RHEA-COMP:17342"/>
        <dbReference type="ChEBI" id="CHEBI:33019"/>
        <dbReference type="ChEBI" id="CHEBI:61557"/>
        <dbReference type="ChEBI" id="CHEBI:140395"/>
        <dbReference type="EC" id="2.7.7.6"/>
    </reaction>
</comment>
<comment type="subunit">
    <text evidence="1">In plastids the minimal PEP RNA polymerase catalytic core is composed of four subunits: alpha, beta, beta', and beta''. When a (nuclear-encoded) sigma factor is associated with the core the holoenzyme is formed, which can initiate transcription (By similarity).</text>
</comment>
<comment type="subcellular location">
    <subcellularLocation>
        <location>Plastid</location>
        <location>Chloroplast</location>
    </subcellularLocation>
</comment>
<comment type="domain">
    <text evidence="1">The N-terminal domain is essential for RNAP assembly and basal transcription, whereas the C-terminal domain is involved in interaction with transcriptional regulators and with upstream promoter elements.</text>
</comment>
<comment type="similarity">
    <text evidence="2">Belongs to the RNA polymerase alpha chain family.</text>
</comment>
<feature type="chain" id="PRO_0000175493" description="DNA-directed RNA polymerase subunit alpha">
    <location>
        <begin position="1"/>
        <end position="478"/>
    </location>
</feature>
<feature type="region of interest" description="Alpha N-terminal domain (alpha-NTD)" evidence="1">
    <location>
        <begin position="1"/>
        <end position="341"/>
    </location>
</feature>
<feature type="region of interest" description="Alpha C-terminal domain (alpha-CTD)" evidence="1">
    <location>
        <begin position="365"/>
        <end position="478"/>
    </location>
</feature>
<feature type="sequence variant" description="In strain: KS3/2.">
    <original>K</original>
    <variation>E</variation>
    <location>
        <position position="3"/>
    </location>
</feature>
<dbReference type="EC" id="2.7.7.6"/>
<dbReference type="EMBL" id="DQ396875">
    <property type="protein sequence ID" value="ABD48283.1"/>
    <property type="molecule type" value="Genomic_DNA"/>
</dbReference>
<dbReference type="RefSeq" id="YP_636000.1">
    <property type="nucleotide sequence ID" value="NC_008101.1"/>
</dbReference>
<dbReference type="SMR" id="P19587"/>
<dbReference type="GeneID" id="4099772"/>
<dbReference type="GO" id="GO:0009507">
    <property type="term" value="C:chloroplast"/>
    <property type="evidence" value="ECO:0007669"/>
    <property type="project" value="UniProtKB-SubCell"/>
</dbReference>
<dbReference type="GO" id="GO:0000428">
    <property type="term" value="C:DNA-directed RNA polymerase complex"/>
    <property type="evidence" value="ECO:0007669"/>
    <property type="project" value="UniProtKB-KW"/>
</dbReference>
<dbReference type="GO" id="GO:0005739">
    <property type="term" value="C:mitochondrion"/>
    <property type="evidence" value="ECO:0007669"/>
    <property type="project" value="GOC"/>
</dbReference>
<dbReference type="GO" id="GO:0003899">
    <property type="term" value="F:DNA-directed RNA polymerase activity"/>
    <property type="evidence" value="ECO:0007669"/>
    <property type="project" value="UniProtKB-EC"/>
</dbReference>
<dbReference type="GO" id="GO:0046983">
    <property type="term" value="F:protein dimerization activity"/>
    <property type="evidence" value="ECO:0007669"/>
    <property type="project" value="InterPro"/>
</dbReference>
<dbReference type="GO" id="GO:0006351">
    <property type="term" value="P:DNA-templated transcription"/>
    <property type="evidence" value="ECO:0007669"/>
    <property type="project" value="InterPro"/>
</dbReference>
<dbReference type="CDD" id="cd06928">
    <property type="entry name" value="RNAP_alpha_NTD"/>
    <property type="match status" value="1"/>
</dbReference>
<dbReference type="Gene3D" id="1.10.150.20">
    <property type="entry name" value="5' to 3' exonuclease, C-terminal subdomain"/>
    <property type="match status" value="1"/>
</dbReference>
<dbReference type="Gene3D" id="2.170.120.12">
    <property type="entry name" value="DNA-directed RNA polymerase, insert domain"/>
    <property type="match status" value="1"/>
</dbReference>
<dbReference type="Gene3D" id="3.30.1360.10">
    <property type="entry name" value="RNA polymerase, RBP11-like subunit"/>
    <property type="match status" value="1"/>
</dbReference>
<dbReference type="InterPro" id="IPR011262">
    <property type="entry name" value="DNA-dir_RNA_pol_insert"/>
</dbReference>
<dbReference type="InterPro" id="IPR011263">
    <property type="entry name" value="DNA-dir_RNA_pol_RpoA/D/Rpb3"/>
</dbReference>
<dbReference type="InterPro" id="IPR036603">
    <property type="entry name" value="RBP11-like"/>
</dbReference>
<dbReference type="InterPro" id="IPR036643">
    <property type="entry name" value="RNApol_insert_sf"/>
</dbReference>
<dbReference type="Pfam" id="PF01000">
    <property type="entry name" value="RNA_pol_A_bac"/>
    <property type="match status" value="1"/>
</dbReference>
<dbReference type="Pfam" id="PF01193">
    <property type="entry name" value="RNA_pol_L"/>
    <property type="match status" value="1"/>
</dbReference>
<dbReference type="SMART" id="SM00662">
    <property type="entry name" value="RPOLD"/>
    <property type="match status" value="1"/>
</dbReference>
<dbReference type="SUPFAM" id="SSF47789">
    <property type="entry name" value="C-terminal domain of RNA polymerase alpha subunit"/>
    <property type="match status" value="1"/>
</dbReference>
<dbReference type="SUPFAM" id="SSF56553">
    <property type="entry name" value="Insert subdomain of RNA polymerase alpha subunit"/>
    <property type="match status" value="1"/>
</dbReference>
<dbReference type="SUPFAM" id="SSF55257">
    <property type="entry name" value="RBP11-like subunits of RNA polymerase"/>
    <property type="match status" value="1"/>
</dbReference>
<geneLocation type="chloroplast"/>
<evidence type="ECO:0000250" key="1"/>
<evidence type="ECO:0000305" key="2"/>
<accession>P19587</accession>
<accession>Q1KVS4</accession>
<organism>
    <name type="scientific">Tetradesmus obliquus</name>
    <name type="common">Green alga</name>
    <name type="synonym">Acutodesmus obliquus</name>
    <dbReference type="NCBI Taxonomy" id="3088"/>
    <lineage>
        <taxon>Eukaryota</taxon>
        <taxon>Viridiplantae</taxon>
        <taxon>Chlorophyta</taxon>
        <taxon>core chlorophytes</taxon>
        <taxon>Chlorophyceae</taxon>
        <taxon>CS clade</taxon>
        <taxon>Sphaeropleales</taxon>
        <taxon>Scenedesmaceae</taxon>
        <taxon>Tetradesmus</taxon>
    </lineage>
</organism>